<organism>
    <name type="scientific">Shewanella loihica (strain ATCC BAA-1088 / PV-4)</name>
    <dbReference type="NCBI Taxonomy" id="323850"/>
    <lineage>
        <taxon>Bacteria</taxon>
        <taxon>Pseudomonadati</taxon>
        <taxon>Pseudomonadota</taxon>
        <taxon>Gammaproteobacteria</taxon>
        <taxon>Alteromonadales</taxon>
        <taxon>Shewanellaceae</taxon>
        <taxon>Shewanella</taxon>
    </lineage>
</organism>
<feature type="chain" id="PRO_1000012804" description="ATP-dependent protease ATPase subunit HslU">
    <location>
        <begin position="1"/>
        <end position="441"/>
    </location>
</feature>
<feature type="binding site" evidence="1">
    <location>
        <position position="18"/>
    </location>
    <ligand>
        <name>ATP</name>
        <dbReference type="ChEBI" id="CHEBI:30616"/>
    </ligand>
</feature>
<feature type="binding site" evidence="1">
    <location>
        <begin position="60"/>
        <end position="65"/>
    </location>
    <ligand>
        <name>ATP</name>
        <dbReference type="ChEBI" id="CHEBI:30616"/>
    </ligand>
</feature>
<feature type="binding site" evidence="1">
    <location>
        <position position="254"/>
    </location>
    <ligand>
        <name>ATP</name>
        <dbReference type="ChEBI" id="CHEBI:30616"/>
    </ligand>
</feature>
<feature type="binding site" evidence="1">
    <location>
        <position position="319"/>
    </location>
    <ligand>
        <name>ATP</name>
        <dbReference type="ChEBI" id="CHEBI:30616"/>
    </ligand>
</feature>
<feature type="binding site" evidence="1">
    <location>
        <position position="391"/>
    </location>
    <ligand>
        <name>ATP</name>
        <dbReference type="ChEBI" id="CHEBI:30616"/>
    </ligand>
</feature>
<evidence type="ECO:0000255" key="1">
    <source>
        <dbReference type="HAMAP-Rule" id="MF_00249"/>
    </source>
</evidence>
<name>HSLU_SHELP</name>
<proteinExistence type="inferred from homology"/>
<sequence length="441" mass="49683">MSEMTPREIVHELDSHIIGQQNAKRSVAIALRNRWRRMQLDAALRQEVTPKNILMIGPTGVGKTEIARRLAKLAKAPFIKVEATKFTEVGYVGKEVEQIIRDLTDAAVKLTREEQMAKCKFRAEEAAEERILDALLPKPKEDWDTEKKDDTGTRQVFRKKLREGQLDDKEIEIDIAAPQVGIEIMSPPGMEEMTSQLQSMFQNMGPGASKRRKMTIKEAYKLLIEEEAAKLVNPDDLKEQAIELVEQHGIVFLDEIDKICKRGDTSGPDVSREGVQRDLLPLVEGCTVNTKHGMVKTDHILFIASGAFQMSKPSDLIPELQGRLPIRVELEALSANDFKRILTEPHASLTEQYVALMATEGVKVEFSESGIERIAQAAWQVNERTENIGARRLHTVMERLMEDLSFEASDKSGSTTVIDADYVNAHLENLVQDEDLSRFIL</sequence>
<protein>
    <recommendedName>
        <fullName evidence="1">ATP-dependent protease ATPase subunit HslU</fullName>
    </recommendedName>
    <alternativeName>
        <fullName evidence="1">Unfoldase HslU</fullName>
    </alternativeName>
</protein>
<reference key="1">
    <citation type="submission" date="2007-03" db="EMBL/GenBank/DDBJ databases">
        <title>Complete sequence of Shewanella loihica PV-4.</title>
        <authorList>
            <consortium name="US DOE Joint Genome Institute"/>
            <person name="Copeland A."/>
            <person name="Lucas S."/>
            <person name="Lapidus A."/>
            <person name="Barry K."/>
            <person name="Detter J.C."/>
            <person name="Glavina del Rio T."/>
            <person name="Hammon N."/>
            <person name="Israni S."/>
            <person name="Dalin E."/>
            <person name="Tice H."/>
            <person name="Pitluck S."/>
            <person name="Chain P."/>
            <person name="Malfatti S."/>
            <person name="Shin M."/>
            <person name="Vergez L."/>
            <person name="Schmutz J."/>
            <person name="Larimer F."/>
            <person name="Land M."/>
            <person name="Hauser L."/>
            <person name="Kyrpides N."/>
            <person name="Mikhailova N."/>
            <person name="Romine M.F."/>
            <person name="Serres G."/>
            <person name="Fredrickson J."/>
            <person name="Tiedje J."/>
            <person name="Richardson P."/>
        </authorList>
    </citation>
    <scope>NUCLEOTIDE SEQUENCE [LARGE SCALE GENOMIC DNA]</scope>
    <source>
        <strain>ATCC BAA-1088 / PV-4</strain>
    </source>
</reference>
<gene>
    <name evidence="1" type="primary">hslU</name>
    <name type="ordered locus">Shew_0374</name>
</gene>
<comment type="function">
    <text evidence="1">ATPase subunit of a proteasome-like degradation complex; this subunit has chaperone activity. The binding of ATP and its subsequent hydrolysis by HslU are essential for unfolding of protein substrates subsequently hydrolyzed by HslV. HslU recognizes the N-terminal part of its protein substrates and unfolds these before they are guided to HslV for hydrolysis.</text>
</comment>
<comment type="subunit">
    <text evidence="1">A double ring-shaped homohexamer of HslV is capped on each side by a ring-shaped HslU homohexamer. The assembly of the HslU/HslV complex is dependent on binding of ATP.</text>
</comment>
<comment type="subcellular location">
    <subcellularLocation>
        <location evidence="1">Cytoplasm</location>
    </subcellularLocation>
</comment>
<comment type="similarity">
    <text evidence="1">Belongs to the ClpX chaperone family. HslU subfamily.</text>
</comment>
<keyword id="KW-0067">ATP-binding</keyword>
<keyword id="KW-0143">Chaperone</keyword>
<keyword id="KW-0963">Cytoplasm</keyword>
<keyword id="KW-0547">Nucleotide-binding</keyword>
<keyword id="KW-1185">Reference proteome</keyword>
<keyword id="KW-0346">Stress response</keyword>
<accession>A3Q9U8</accession>
<dbReference type="EMBL" id="CP000606">
    <property type="protein sequence ID" value="ABO22246.1"/>
    <property type="molecule type" value="Genomic_DNA"/>
</dbReference>
<dbReference type="RefSeq" id="WP_011864180.1">
    <property type="nucleotide sequence ID" value="NC_009092.1"/>
</dbReference>
<dbReference type="SMR" id="A3Q9U8"/>
<dbReference type="STRING" id="323850.Shew_0374"/>
<dbReference type="KEGG" id="slo:Shew_0374"/>
<dbReference type="eggNOG" id="COG1220">
    <property type="taxonomic scope" value="Bacteria"/>
</dbReference>
<dbReference type="HOGENOM" id="CLU_033123_0_0_6"/>
<dbReference type="OrthoDB" id="9804062at2"/>
<dbReference type="Proteomes" id="UP000001558">
    <property type="component" value="Chromosome"/>
</dbReference>
<dbReference type="GO" id="GO:0009376">
    <property type="term" value="C:HslUV protease complex"/>
    <property type="evidence" value="ECO:0007669"/>
    <property type="project" value="UniProtKB-UniRule"/>
</dbReference>
<dbReference type="GO" id="GO:0005524">
    <property type="term" value="F:ATP binding"/>
    <property type="evidence" value="ECO:0007669"/>
    <property type="project" value="UniProtKB-UniRule"/>
</dbReference>
<dbReference type="GO" id="GO:0016887">
    <property type="term" value="F:ATP hydrolysis activity"/>
    <property type="evidence" value="ECO:0007669"/>
    <property type="project" value="InterPro"/>
</dbReference>
<dbReference type="GO" id="GO:0008233">
    <property type="term" value="F:peptidase activity"/>
    <property type="evidence" value="ECO:0007669"/>
    <property type="project" value="InterPro"/>
</dbReference>
<dbReference type="GO" id="GO:0036402">
    <property type="term" value="F:proteasome-activating activity"/>
    <property type="evidence" value="ECO:0007669"/>
    <property type="project" value="UniProtKB-UniRule"/>
</dbReference>
<dbReference type="GO" id="GO:0043335">
    <property type="term" value="P:protein unfolding"/>
    <property type="evidence" value="ECO:0007669"/>
    <property type="project" value="UniProtKB-UniRule"/>
</dbReference>
<dbReference type="GO" id="GO:0051603">
    <property type="term" value="P:proteolysis involved in protein catabolic process"/>
    <property type="evidence" value="ECO:0007669"/>
    <property type="project" value="TreeGrafter"/>
</dbReference>
<dbReference type="CDD" id="cd19498">
    <property type="entry name" value="RecA-like_HslU"/>
    <property type="match status" value="1"/>
</dbReference>
<dbReference type="FunFam" id="1.10.8.10:FF:000028">
    <property type="entry name" value="ATP-dependent protease ATPase subunit HslU"/>
    <property type="match status" value="1"/>
</dbReference>
<dbReference type="FunFam" id="1.10.8.60:FF:000027">
    <property type="entry name" value="ATP-dependent protease ATPase subunit HslU"/>
    <property type="match status" value="1"/>
</dbReference>
<dbReference type="FunFam" id="3.40.50.300:FF:000213">
    <property type="entry name" value="ATP-dependent protease ATPase subunit HslU"/>
    <property type="match status" value="1"/>
</dbReference>
<dbReference type="FunFam" id="3.40.50.300:FF:000220">
    <property type="entry name" value="ATP-dependent protease ATPase subunit HslU"/>
    <property type="match status" value="1"/>
</dbReference>
<dbReference type="Gene3D" id="1.10.8.60">
    <property type="match status" value="1"/>
</dbReference>
<dbReference type="Gene3D" id="1.10.8.10">
    <property type="entry name" value="DNA helicase RuvA subunit, C-terminal domain"/>
    <property type="match status" value="1"/>
</dbReference>
<dbReference type="Gene3D" id="3.40.50.300">
    <property type="entry name" value="P-loop containing nucleotide triphosphate hydrolases"/>
    <property type="match status" value="2"/>
</dbReference>
<dbReference type="HAMAP" id="MF_00249">
    <property type="entry name" value="HslU"/>
    <property type="match status" value="1"/>
</dbReference>
<dbReference type="InterPro" id="IPR003593">
    <property type="entry name" value="AAA+_ATPase"/>
</dbReference>
<dbReference type="InterPro" id="IPR050052">
    <property type="entry name" value="ATP-dep_Clp_protease_ClpX"/>
</dbReference>
<dbReference type="InterPro" id="IPR003959">
    <property type="entry name" value="ATPase_AAA_core"/>
</dbReference>
<dbReference type="InterPro" id="IPR019489">
    <property type="entry name" value="Clp_ATPase_C"/>
</dbReference>
<dbReference type="InterPro" id="IPR004491">
    <property type="entry name" value="HslU"/>
</dbReference>
<dbReference type="InterPro" id="IPR027417">
    <property type="entry name" value="P-loop_NTPase"/>
</dbReference>
<dbReference type="NCBIfam" id="TIGR00390">
    <property type="entry name" value="hslU"/>
    <property type="match status" value="1"/>
</dbReference>
<dbReference type="NCBIfam" id="NF003544">
    <property type="entry name" value="PRK05201.1"/>
    <property type="match status" value="1"/>
</dbReference>
<dbReference type="PANTHER" id="PTHR48102">
    <property type="entry name" value="ATP-DEPENDENT CLP PROTEASE ATP-BINDING SUBUNIT CLPX-LIKE, MITOCHONDRIAL-RELATED"/>
    <property type="match status" value="1"/>
</dbReference>
<dbReference type="PANTHER" id="PTHR48102:SF3">
    <property type="entry name" value="ATP-DEPENDENT PROTEASE ATPASE SUBUNIT HSLU"/>
    <property type="match status" value="1"/>
</dbReference>
<dbReference type="Pfam" id="PF00004">
    <property type="entry name" value="AAA"/>
    <property type="match status" value="1"/>
</dbReference>
<dbReference type="Pfam" id="PF07724">
    <property type="entry name" value="AAA_2"/>
    <property type="match status" value="1"/>
</dbReference>
<dbReference type="SMART" id="SM00382">
    <property type="entry name" value="AAA"/>
    <property type="match status" value="1"/>
</dbReference>
<dbReference type="SMART" id="SM01086">
    <property type="entry name" value="ClpB_D2-small"/>
    <property type="match status" value="1"/>
</dbReference>
<dbReference type="SUPFAM" id="SSF52540">
    <property type="entry name" value="P-loop containing nucleoside triphosphate hydrolases"/>
    <property type="match status" value="1"/>
</dbReference>